<keyword id="KW-0031">Aminopeptidase</keyword>
<keyword id="KW-0963">Cytoplasm</keyword>
<keyword id="KW-0378">Hydrolase</keyword>
<keyword id="KW-0464">Manganese</keyword>
<keyword id="KW-0479">Metal-binding</keyword>
<keyword id="KW-0645">Protease</keyword>
<keyword id="KW-1185">Reference proteome</keyword>
<evidence type="ECO:0000255" key="1">
    <source>
        <dbReference type="HAMAP-Rule" id="MF_00181"/>
    </source>
</evidence>
<accession>Q82X54</accession>
<reference key="1">
    <citation type="journal article" date="2003" name="J. Bacteriol.">
        <title>Complete genome sequence of the ammonia-oxidizing bacterium and obligate chemolithoautotroph Nitrosomonas europaea.</title>
        <authorList>
            <person name="Chain P."/>
            <person name="Lamerdin J.E."/>
            <person name="Larimer F.W."/>
            <person name="Regala W."/>
            <person name="Lao V."/>
            <person name="Land M.L."/>
            <person name="Hauser L."/>
            <person name="Hooper A.B."/>
            <person name="Klotz M.G."/>
            <person name="Norton J."/>
            <person name="Sayavedra-Soto L.A."/>
            <person name="Arciero D.M."/>
            <person name="Hommes N.G."/>
            <person name="Whittaker M.M."/>
            <person name="Arp D.J."/>
        </authorList>
    </citation>
    <scope>NUCLEOTIDE SEQUENCE [LARGE SCALE GENOMIC DNA]</scope>
    <source>
        <strain>ATCC 19718 / CIP 103999 / KCTC 2705 / NBRC 14298</strain>
    </source>
</reference>
<comment type="function">
    <text evidence="1">Presumably involved in the processing and regular turnover of intracellular proteins. Catalyzes the removal of unsubstituted N-terminal amino acids from various peptides.</text>
</comment>
<comment type="catalytic activity">
    <reaction evidence="1">
        <text>Release of an N-terminal amino acid, Xaa-|-Yaa-, in which Xaa is preferably Leu, but may be other amino acids including Pro although not Arg or Lys, and Yaa may be Pro. Amino acid amides and methyl esters are also readily hydrolyzed, but rates on arylamides are exceedingly low.</text>
        <dbReference type="EC" id="3.4.11.1"/>
    </reaction>
</comment>
<comment type="catalytic activity">
    <reaction evidence="1">
        <text>Release of an N-terminal amino acid, preferentially leucine, but not glutamic or aspartic acids.</text>
        <dbReference type="EC" id="3.4.11.10"/>
    </reaction>
</comment>
<comment type="cofactor">
    <cofactor evidence="1">
        <name>Mn(2+)</name>
        <dbReference type="ChEBI" id="CHEBI:29035"/>
    </cofactor>
    <text evidence="1">Binds 2 manganese ions per subunit.</text>
</comment>
<comment type="subcellular location">
    <subcellularLocation>
        <location evidence="1">Cytoplasm</location>
    </subcellularLocation>
</comment>
<comment type="similarity">
    <text evidence="1">Belongs to the peptidase M17 family.</text>
</comment>
<protein>
    <recommendedName>
        <fullName evidence="1">Probable cytosol aminopeptidase</fullName>
        <ecNumber evidence="1">3.4.11.1</ecNumber>
    </recommendedName>
    <alternativeName>
        <fullName evidence="1">Leucine aminopeptidase</fullName>
        <shortName evidence="1">LAP</shortName>
        <ecNumber evidence="1">3.4.11.10</ecNumber>
    </alternativeName>
    <alternativeName>
        <fullName evidence="1">Leucyl aminopeptidase</fullName>
    </alternativeName>
</protein>
<dbReference type="EC" id="3.4.11.1" evidence="1"/>
<dbReference type="EC" id="3.4.11.10" evidence="1"/>
<dbReference type="EMBL" id="AL954747">
    <property type="protein sequence ID" value="CAD84352.1"/>
    <property type="molecule type" value="Genomic_DNA"/>
</dbReference>
<dbReference type="RefSeq" id="WP_011111076.1">
    <property type="nucleotide sequence ID" value="NC_004757.1"/>
</dbReference>
<dbReference type="SMR" id="Q82X54"/>
<dbReference type="STRING" id="228410.NE0441"/>
<dbReference type="MEROPS" id="M17.003"/>
<dbReference type="GeneID" id="87103650"/>
<dbReference type="KEGG" id="neu:NE0441"/>
<dbReference type="eggNOG" id="COG0260">
    <property type="taxonomic scope" value="Bacteria"/>
</dbReference>
<dbReference type="HOGENOM" id="CLU_013734_2_2_4"/>
<dbReference type="OrthoDB" id="9809354at2"/>
<dbReference type="PhylomeDB" id="Q82X54"/>
<dbReference type="Proteomes" id="UP000001416">
    <property type="component" value="Chromosome"/>
</dbReference>
<dbReference type="GO" id="GO:0005737">
    <property type="term" value="C:cytoplasm"/>
    <property type="evidence" value="ECO:0007669"/>
    <property type="project" value="UniProtKB-SubCell"/>
</dbReference>
<dbReference type="GO" id="GO:0030145">
    <property type="term" value="F:manganese ion binding"/>
    <property type="evidence" value="ECO:0007669"/>
    <property type="project" value="UniProtKB-UniRule"/>
</dbReference>
<dbReference type="GO" id="GO:0070006">
    <property type="term" value="F:metalloaminopeptidase activity"/>
    <property type="evidence" value="ECO:0007669"/>
    <property type="project" value="InterPro"/>
</dbReference>
<dbReference type="GO" id="GO:0006508">
    <property type="term" value="P:proteolysis"/>
    <property type="evidence" value="ECO:0007669"/>
    <property type="project" value="UniProtKB-KW"/>
</dbReference>
<dbReference type="CDD" id="cd00433">
    <property type="entry name" value="Peptidase_M17"/>
    <property type="match status" value="1"/>
</dbReference>
<dbReference type="FunFam" id="3.40.630.10:FF:000004">
    <property type="entry name" value="Probable cytosol aminopeptidase"/>
    <property type="match status" value="1"/>
</dbReference>
<dbReference type="Gene3D" id="3.40.220.10">
    <property type="entry name" value="Leucine Aminopeptidase, subunit E, domain 1"/>
    <property type="match status" value="1"/>
</dbReference>
<dbReference type="Gene3D" id="3.40.630.10">
    <property type="entry name" value="Zn peptidases"/>
    <property type="match status" value="1"/>
</dbReference>
<dbReference type="HAMAP" id="MF_00181">
    <property type="entry name" value="Cytosol_peptidase_M17"/>
    <property type="match status" value="1"/>
</dbReference>
<dbReference type="InterPro" id="IPR011356">
    <property type="entry name" value="Leucine_aapep/pepB"/>
</dbReference>
<dbReference type="InterPro" id="IPR043472">
    <property type="entry name" value="Macro_dom-like"/>
</dbReference>
<dbReference type="InterPro" id="IPR000819">
    <property type="entry name" value="Peptidase_M17_C"/>
</dbReference>
<dbReference type="InterPro" id="IPR023042">
    <property type="entry name" value="Peptidase_M17_leu_NH2_pept"/>
</dbReference>
<dbReference type="InterPro" id="IPR008283">
    <property type="entry name" value="Peptidase_M17_N"/>
</dbReference>
<dbReference type="NCBIfam" id="NF002073">
    <property type="entry name" value="PRK00913.1-2"/>
    <property type="match status" value="1"/>
</dbReference>
<dbReference type="NCBIfam" id="NF002074">
    <property type="entry name" value="PRK00913.1-4"/>
    <property type="match status" value="1"/>
</dbReference>
<dbReference type="NCBIfam" id="NF002077">
    <property type="entry name" value="PRK00913.2-4"/>
    <property type="match status" value="1"/>
</dbReference>
<dbReference type="PANTHER" id="PTHR11963:SF23">
    <property type="entry name" value="CYTOSOL AMINOPEPTIDASE"/>
    <property type="match status" value="1"/>
</dbReference>
<dbReference type="PANTHER" id="PTHR11963">
    <property type="entry name" value="LEUCINE AMINOPEPTIDASE-RELATED"/>
    <property type="match status" value="1"/>
</dbReference>
<dbReference type="Pfam" id="PF00883">
    <property type="entry name" value="Peptidase_M17"/>
    <property type="match status" value="1"/>
</dbReference>
<dbReference type="Pfam" id="PF02789">
    <property type="entry name" value="Peptidase_M17_N"/>
    <property type="match status" value="1"/>
</dbReference>
<dbReference type="PRINTS" id="PR00481">
    <property type="entry name" value="LAMNOPPTDASE"/>
</dbReference>
<dbReference type="SUPFAM" id="SSF52949">
    <property type="entry name" value="Macro domain-like"/>
    <property type="match status" value="1"/>
</dbReference>
<dbReference type="SUPFAM" id="SSF53187">
    <property type="entry name" value="Zn-dependent exopeptidases"/>
    <property type="match status" value="1"/>
</dbReference>
<dbReference type="PROSITE" id="PS00631">
    <property type="entry name" value="CYTOSOL_AP"/>
    <property type="match status" value="1"/>
</dbReference>
<feature type="chain" id="PRO_0000165773" description="Probable cytosol aminopeptidase">
    <location>
        <begin position="1"/>
        <end position="497"/>
    </location>
</feature>
<feature type="active site" evidence="1">
    <location>
        <position position="279"/>
    </location>
</feature>
<feature type="active site" evidence="1">
    <location>
        <position position="353"/>
    </location>
</feature>
<feature type="binding site" evidence="1">
    <location>
        <position position="267"/>
    </location>
    <ligand>
        <name>Mn(2+)</name>
        <dbReference type="ChEBI" id="CHEBI:29035"/>
        <label>2</label>
    </ligand>
</feature>
<feature type="binding site" evidence="1">
    <location>
        <position position="272"/>
    </location>
    <ligand>
        <name>Mn(2+)</name>
        <dbReference type="ChEBI" id="CHEBI:29035"/>
        <label>1</label>
    </ligand>
</feature>
<feature type="binding site" evidence="1">
    <location>
        <position position="272"/>
    </location>
    <ligand>
        <name>Mn(2+)</name>
        <dbReference type="ChEBI" id="CHEBI:29035"/>
        <label>2</label>
    </ligand>
</feature>
<feature type="binding site" evidence="1">
    <location>
        <position position="290"/>
    </location>
    <ligand>
        <name>Mn(2+)</name>
        <dbReference type="ChEBI" id="CHEBI:29035"/>
        <label>2</label>
    </ligand>
</feature>
<feature type="binding site" evidence="1">
    <location>
        <position position="349"/>
    </location>
    <ligand>
        <name>Mn(2+)</name>
        <dbReference type="ChEBI" id="CHEBI:29035"/>
        <label>1</label>
    </ligand>
</feature>
<feature type="binding site" evidence="1">
    <location>
        <position position="351"/>
    </location>
    <ligand>
        <name>Mn(2+)</name>
        <dbReference type="ChEBI" id="CHEBI:29035"/>
        <label>1</label>
    </ligand>
</feature>
<feature type="binding site" evidence="1">
    <location>
        <position position="351"/>
    </location>
    <ligand>
        <name>Mn(2+)</name>
        <dbReference type="ChEBI" id="CHEBI:29035"/>
        <label>2</label>
    </ligand>
</feature>
<gene>
    <name evidence="1" type="primary">pepA</name>
    <name type="ordered locus">NE0441</name>
</gene>
<organism>
    <name type="scientific">Nitrosomonas europaea (strain ATCC 19718 / CIP 103999 / KCTC 2705 / NBRC 14298)</name>
    <dbReference type="NCBI Taxonomy" id="228410"/>
    <lineage>
        <taxon>Bacteria</taxon>
        <taxon>Pseudomonadati</taxon>
        <taxon>Pseudomonadota</taxon>
        <taxon>Betaproteobacteria</taxon>
        <taxon>Nitrosomonadales</taxon>
        <taxon>Nitrosomonadaceae</taxon>
        <taxon>Nitrosomonas</taxon>
    </lineage>
</organism>
<proteinExistence type="inferred from homology"/>
<name>AMPA_NITEU</name>
<sequence>MDFAIRSDNPEKYRGDCIVVGVFESRKLTEAARVLDEAGKGHLGRIVDQGDMDGRANTTLLLHGISGIDSKRVLLIGLGKEEEFGEKVFLDVVRTTFKALQPTGAKDVGLYLTELTVKGRDVAWNVLQTVILAEESAYRFDRLKSKPEGRQPSLAKVDIGITDTSTAAAVETALQQGLAIAHGMKVTKDLGNLAPNICTPSYLAGQAEEMARTFNLKFSVLEEKDMEELGMGALLAVARGSHQPAKLIVLEYHGGKDSEKPVALVGKGVTFDAGGISLKPAAEMDEMKYDMGGAASVFGTLTAVAELKLPINVIGVIPTTENLPGGNATKPGDVVTSLSGQTIEILNTDAEGRLILCDALAYTERYDPEVVVDIATLTGACVVALGHVVSGVMGNDEPLVQELLQAGEQTYDRAWHLPLFDEYQEQLKSNFADTANIGSRWGGAITAACFLSRFTKKFRWAHLDIAGTAWKSGKEKGATGRPVPLLTQFLISRANKH</sequence>